<dbReference type="EC" id="3.1.-.-" evidence="1"/>
<dbReference type="EC" id="5.6.2.4" evidence="1"/>
<dbReference type="EMBL" id="AL596172">
    <property type="protein sequence ID" value="CAC97595.1"/>
    <property type="molecule type" value="Genomic_DNA"/>
</dbReference>
<dbReference type="PIR" id="AC1728">
    <property type="entry name" value="AC1728"/>
</dbReference>
<dbReference type="RefSeq" id="WP_010991144.1">
    <property type="nucleotide sequence ID" value="NC_003212.1"/>
</dbReference>
<dbReference type="SMR" id="Q929A9"/>
<dbReference type="STRING" id="272626.gene:17566729"/>
<dbReference type="DNASU" id="1131127"/>
<dbReference type="GeneID" id="93235715"/>
<dbReference type="KEGG" id="lin:lin2368"/>
<dbReference type="eggNOG" id="COG1074">
    <property type="taxonomic scope" value="Bacteria"/>
</dbReference>
<dbReference type="HOGENOM" id="CLU_001114_3_1_9"/>
<dbReference type="OrthoDB" id="9810135at2"/>
<dbReference type="Proteomes" id="UP000002513">
    <property type="component" value="Chromosome"/>
</dbReference>
<dbReference type="GO" id="GO:0005829">
    <property type="term" value="C:cytosol"/>
    <property type="evidence" value="ECO:0007669"/>
    <property type="project" value="TreeGrafter"/>
</dbReference>
<dbReference type="GO" id="GO:0033202">
    <property type="term" value="C:DNA helicase complex"/>
    <property type="evidence" value="ECO:0007669"/>
    <property type="project" value="TreeGrafter"/>
</dbReference>
<dbReference type="GO" id="GO:0043138">
    <property type="term" value="F:3'-5' DNA helicase activity"/>
    <property type="evidence" value="ECO:0007669"/>
    <property type="project" value="UniProtKB-UniRule"/>
</dbReference>
<dbReference type="GO" id="GO:0008408">
    <property type="term" value="F:3'-5' exonuclease activity"/>
    <property type="evidence" value="ECO:0007669"/>
    <property type="project" value="UniProtKB-UniRule"/>
</dbReference>
<dbReference type="GO" id="GO:0005524">
    <property type="term" value="F:ATP binding"/>
    <property type="evidence" value="ECO:0007669"/>
    <property type="project" value="UniProtKB-UniRule"/>
</dbReference>
<dbReference type="GO" id="GO:0016887">
    <property type="term" value="F:ATP hydrolysis activity"/>
    <property type="evidence" value="ECO:0007669"/>
    <property type="project" value="RHEA"/>
</dbReference>
<dbReference type="GO" id="GO:0003690">
    <property type="term" value="F:double-stranded DNA binding"/>
    <property type="evidence" value="ECO:0007669"/>
    <property type="project" value="UniProtKB-UniRule"/>
</dbReference>
<dbReference type="GO" id="GO:0000724">
    <property type="term" value="P:double-strand break repair via homologous recombination"/>
    <property type="evidence" value="ECO:0007669"/>
    <property type="project" value="UniProtKB-UniRule"/>
</dbReference>
<dbReference type="FunFam" id="3.40.50.300:FF:001164">
    <property type="entry name" value="ATP-dependent helicase/nuclease subunit A"/>
    <property type="match status" value="1"/>
</dbReference>
<dbReference type="FunFam" id="3.40.50.300:FF:001187">
    <property type="entry name" value="ATP-dependent helicase/nuclease subunit A"/>
    <property type="match status" value="1"/>
</dbReference>
<dbReference type="FunFam" id="3.40.50.300:FF:001196">
    <property type="entry name" value="ATP-dependent helicase/nuclease subunit A"/>
    <property type="match status" value="1"/>
</dbReference>
<dbReference type="FunFam" id="3.40.50.300:FF:001236">
    <property type="entry name" value="ATP-dependent helicase/nuclease subunit A"/>
    <property type="match status" value="1"/>
</dbReference>
<dbReference type="Gene3D" id="3.90.320.10">
    <property type="match status" value="1"/>
</dbReference>
<dbReference type="Gene3D" id="3.40.50.300">
    <property type="entry name" value="P-loop containing nucleotide triphosphate hydrolases"/>
    <property type="match status" value="4"/>
</dbReference>
<dbReference type="HAMAP" id="MF_01451">
    <property type="entry name" value="AddA"/>
    <property type="match status" value="1"/>
</dbReference>
<dbReference type="InterPro" id="IPR014152">
    <property type="entry name" value="AddA"/>
</dbReference>
<dbReference type="InterPro" id="IPR014017">
    <property type="entry name" value="DNA_helicase_UvrD-like_C"/>
</dbReference>
<dbReference type="InterPro" id="IPR000212">
    <property type="entry name" value="DNA_helicase_UvrD/REP"/>
</dbReference>
<dbReference type="InterPro" id="IPR027417">
    <property type="entry name" value="P-loop_NTPase"/>
</dbReference>
<dbReference type="InterPro" id="IPR011604">
    <property type="entry name" value="PDDEXK-like_dom_sf"/>
</dbReference>
<dbReference type="InterPro" id="IPR038726">
    <property type="entry name" value="PDDEXK_AddAB-type"/>
</dbReference>
<dbReference type="InterPro" id="IPR011335">
    <property type="entry name" value="Restrct_endonuc-II-like"/>
</dbReference>
<dbReference type="InterPro" id="IPR014016">
    <property type="entry name" value="UvrD-like_ATP-bd"/>
</dbReference>
<dbReference type="NCBIfam" id="TIGR02785">
    <property type="entry name" value="addA_Gpos"/>
    <property type="match status" value="1"/>
</dbReference>
<dbReference type="PANTHER" id="PTHR11070:SF48">
    <property type="entry name" value="ATP-DEPENDENT HELICASE_NUCLEASE SUBUNIT A"/>
    <property type="match status" value="1"/>
</dbReference>
<dbReference type="PANTHER" id="PTHR11070">
    <property type="entry name" value="UVRD / RECB / PCRA DNA HELICASE FAMILY MEMBER"/>
    <property type="match status" value="1"/>
</dbReference>
<dbReference type="Pfam" id="PF12705">
    <property type="entry name" value="PDDEXK_1"/>
    <property type="match status" value="1"/>
</dbReference>
<dbReference type="Pfam" id="PF00580">
    <property type="entry name" value="UvrD-helicase"/>
    <property type="match status" value="1"/>
</dbReference>
<dbReference type="Pfam" id="PF13361">
    <property type="entry name" value="UvrD_C"/>
    <property type="match status" value="1"/>
</dbReference>
<dbReference type="SUPFAM" id="SSF52540">
    <property type="entry name" value="P-loop containing nucleoside triphosphate hydrolases"/>
    <property type="match status" value="1"/>
</dbReference>
<dbReference type="SUPFAM" id="SSF52980">
    <property type="entry name" value="Restriction endonuclease-like"/>
    <property type="match status" value="1"/>
</dbReference>
<dbReference type="PROSITE" id="PS51198">
    <property type="entry name" value="UVRD_HELICASE_ATP_BIND"/>
    <property type="match status" value="1"/>
</dbReference>
<dbReference type="PROSITE" id="PS51217">
    <property type="entry name" value="UVRD_HELICASE_CTER"/>
    <property type="match status" value="1"/>
</dbReference>
<accession>Q929A9</accession>
<proteinExistence type="inferred from homology"/>
<keyword id="KW-0067">ATP-binding</keyword>
<keyword id="KW-0227">DNA damage</keyword>
<keyword id="KW-0234">DNA repair</keyword>
<keyword id="KW-0238">DNA-binding</keyword>
<keyword id="KW-0269">Exonuclease</keyword>
<keyword id="KW-0347">Helicase</keyword>
<keyword id="KW-0378">Hydrolase</keyword>
<keyword id="KW-0413">Isomerase</keyword>
<keyword id="KW-0540">Nuclease</keyword>
<keyword id="KW-0547">Nucleotide-binding</keyword>
<evidence type="ECO:0000255" key="1">
    <source>
        <dbReference type="HAMAP-Rule" id="MF_01451"/>
    </source>
</evidence>
<comment type="function">
    <text evidence="1">The heterodimer acts as both an ATP-dependent DNA helicase and an ATP-dependent, dual-direction single-stranded exonuclease. Recognizes the chi site generating a DNA molecule suitable for the initiation of homologous recombination. The AddA nuclease domain is required for chi fragment generation; this subunit has the helicase and 3' -&gt; 5' nuclease activities.</text>
</comment>
<comment type="catalytic activity">
    <reaction evidence="1">
        <text>Couples ATP hydrolysis with the unwinding of duplex DNA by translocating in the 3'-5' direction.</text>
        <dbReference type="EC" id="5.6.2.4"/>
    </reaction>
</comment>
<comment type="catalytic activity">
    <reaction evidence="1">
        <text>ATP + H2O = ADP + phosphate + H(+)</text>
        <dbReference type="Rhea" id="RHEA:13065"/>
        <dbReference type="ChEBI" id="CHEBI:15377"/>
        <dbReference type="ChEBI" id="CHEBI:15378"/>
        <dbReference type="ChEBI" id="CHEBI:30616"/>
        <dbReference type="ChEBI" id="CHEBI:43474"/>
        <dbReference type="ChEBI" id="CHEBI:456216"/>
        <dbReference type="EC" id="5.6.2.4"/>
    </reaction>
</comment>
<comment type="cofactor">
    <cofactor evidence="1">
        <name>Mg(2+)</name>
        <dbReference type="ChEBI" id="CHEBI:18420"/>
    </cofactor>
</comment>
<comment type="subunit">
    <text evidence="1">Heterodimer of AddA and AddB/RexB.</text>
</comment>
<comment type="similarity">
    <text evidence="1">Belongs to the helicase family. AddA subfamily.</text>
</comment>
<sequence>MRLNIPTKPEDALWTDDQWKAIQANGNNILVAAAAGSGKTAVLVTRIIEKLINETENLNVDELLIVTFTNVSAAEMKYRIGKSLEEALVQNPESVHLKKQVALLNYASISTLHSFCLEIIRKHYFEADIDPNFRLIEPIESSMIRDEVLEDLLEKEYSIENNEGFFHLVESFTGDRSDAELHTLISKLYDFSRANPNPDLWLEQMVSFYDTQAITSITELPYFPIIKEDIQLRINQAKSYLLTAIDYANENNGPAPYLSTLENDLAQINTLSSISWDNWQDVKFGFESIDFKRIPALKNKADFDEEYVEEAKKFRDAAKKEVKNVLIDWFSREEENYLSDLEKMKPDIKTLSELVKKFAENFFEEKQQRGVLDFNDLEHLALKILLKNGAPSDVANSYKKQFKEVLIDEYQDTNMVQETILLLVTNSNDTKGNLFMVGDVKQSIYRFRLAEPTLFMAKYQEYQQDGEGSGIRIDLSQNFRSRKEVLDATNFIFHQLMDKHIAEIDYDEAAELTLGASFPEANNMATELLLIDMKSEEKESEDELSPQELQKNQVESRAIATKIREMIDNKFPIYDKKLQQNRPIQYRDIVILARAMTSAPDMEEAMKIKDIPFYANNNSGYFETTEVATMIALMKVIDNPYQDISLAAVLRSPIIGLNEEELGQIRMAKKKGYFFDAMLAYKDITVSDAANKISRFITQLNNWRELSIRENLTALIWQIYQETNFYEFVGGLPGGKQRQANLRALYDRANQYEKTSFRGLFRFVRFVERLEVRGDDLGTAKTLGEKEDVVRMMTIHASKGLEFPVVIVSGLSRKFNMRDIYSKTLLDKDYGFASNYRDIEKMIVYPTIMQQAIKQKKYREMIAEEMRVLYVALTRAEEKLILTATVPDFEKTSKNWLQVSNQQETILPAAIRAKAKCYLDWIGNATIRHSHFKELLCEEKIKTLPTDMKLQVEIKTKEMFLTDDLEKEKSDNWMENVKAHKQVPVKSPYKDEIERFMHYQYKDEEATGIRAKQSVTELKRQFSLQDSWSDTSILKEFQKVSLDRPKFLQQNKLSATEIGTAMHTLMQAVPLDDKPTEKDLVSLLQLMREKDILTEAQIKAINVNQIIAFFESALGKTVLQKKDKVKREVPFSYLLPAAKLYNQTNLDEHVLIQGVVDSMIEEEDSIILIDYKTDKIEGRYDNWEAAEKVMKERYQIQIKLYAEAIQAISRKKVSHAYLYFFDGQHICQINIEEGI</sequence>
<organism>
    <name type="scientific">Listeria innocua serovar 6a (strain ATCC BAA-680 / CLIP 11262)</name>
    <dbReference type="NCBI Taxonomy" id="272626"/>
    <lineage>
        <taxon>Bacteria</taxon>
        <taxon>Bacillati</taxon>
        <taxon>Bacillota</taxon>
        <taxon>Bacilli</taxon>
        <taxon>Bacillales</taxon>
        <taxon>Listeriaceae</taxon>
        <taxon>Listeria</taxon>
    </lineage>
</organism>
<gene>
    <name evidence="1" type="primary">addA</name>
    <name type="ordered locus">lin2368</name>
</gene>
<name>ADDA_LISIN</name>
<reference key="1">
    <citation type="journal article" date="2001" name="Science">
        <title>Comparative genomics of Listeria species.</title>
        <authorList>
            <person name="Glaser P."/>
            <person name="Frangeul L."/>
            <person name="Buchrieser C."/>
            <person name="Rusniok C."/>
            <person name="Amend A."/>
            <person name="Baquero F."/>
            <person name="Berche P."/>
            <person name="Bloecker H."/>
            <person name="Brandt P."/>
            <person name="Chakraborty T."/>
            <person name="Charbit A."/>
            <person name="Chetouani F."/>
            <person name="Couve E."/>
            <person name="de Daruvar A."/>
            <person name="Dehoux P."/>
            <person name="Domann E."/>
            <person name="Dominguez-Bernal G."/>
            <person name="Duchaud E."/>
            <person name="Durant L."/>
            <person name="Dussurget O."/>
            <person name="Entian K.-D."/>
            <person name="Fsihi H."/>
            <person name="Garcia-del Portillo F."/>
            <person name="Garrido P."/>
            <person name="Gautier L."/>
            <person name="Goebel W."/>
            <person name="Gomez-Lopez N."/>
            <person name="Hain T."/>
            <person name="Hauf J."/>
            <person name="Jackson D."/>
            <person name="Jones L.-M."/>
            <person name="Kaerst U."/>
            <person name="Kreft J."/>
            <person name="Kuhn M."/>
            <person name="Kunst F."/>
            <person name="Kurapkat G."/>
            <person name="Madueno E."/>
            <person name="Maitournam A."/>
            <person name="Mata Vicente J."/>
            <person name="Ng E."/>
            <person name="Nedjari H."/>
            <person name="Nordsiek G."/>
            <person name="Novella S."/>
            <person name="de Pablos B."/>
            <person name="Perez-Diaz J.-C."/>
            <person name="Purcell R."/>
            <person name="Remmel B."/>
            <person name="Rose M."/>
            <person name="Schlueter T."/>
            <person name="Simoes N."/>
            <person name="Tierrez A."/>
            <person name="Vazquez-Boland J.-A."/>
            <person name="Voss H."/>
            <person name="Wehland J."/>
            <person name="Cossart P."/>
        </authorList>
    </citation>
    <scope>NUCLEOTIDE SEQUENCE [LARGE SCALE GENOMIC DNA]</scope>
    <source>
        <strain>ATCC BAA-680 / CLIP 11262</strain>
    </source>
</reference>
<feature type="chain" id="PRO_0000379295" description="ATP-dependent helicase/nuclease subunit A">
    <location>
        <begin position="1"/>
        <end position="1235"/>
    </location>
</feature>
<feature type="domain" description="UvrD-like helicase ATP-binding" evidence="1">
    <location>
        <begin position="12"/>
        <end position="482"/>
    </location>
</feature>
<feature type="domain" description="UvrD-like helicase C-terminal" evidence="1">
    <location>
        <begin position="509"/>
        <end position="800"/>
    </location>
</feature>
<feature type="binding site" evidence="1">
    <location>
        <begin position="33"/>
        <end position="40"/>
    </location>
    <ligand>
        <name>ATP</name>
        <dbReference type="ChEBI" id="CHEBI:30616"/>
    </ligand>
</feature>
<protein>
    <recommendedName>
        <fullName evidence="1">ATP-dependent helicase/nuclease subunit A</fullName>
        <ecNumber evidence="1">3.1.-.-</ecNumber>
        <ecNumber evidence="1">5.6.2.4</ecNumber>
    </recommendedName>
    <alternativeName>
        <fullName evidence="1">ATP-dependent helicase/nuclease AddA</fullName>
    </alternativeName>
    <alternativeName>
        <fullName evidence="1">DNA 3'-5' helicase AddA</fullName>
    </alternativeName>
</protein>